<keyword id="KW-0025">Alternative splicing</keyword>
<keyword id="KW-0217">Developmental protein</keyword>
<keyword id="KW-0238">DNA-binding</keyword>
<keyword id="KW-0479">Metal-binding</keyword>
<keyword id="KW-0539">Nucleus</keyword>
<keyword id="KW-1185">Reference proteome</keyword>
<keyword id="KW-0862">Zinc</keyword>
<keyword id="KW-0863">Zinc-finger</keyword>
<gene>
    <name type="primary">YAB3</name>
    <name type="ordered locus">At4g00180</name>
    <name type="ORF">F6N15.22</name>
</gene>
<evidence type="ECO:0000250" key="1"/>
<evidence type="ECO:0000255" key="2"/>
<evidence type="ECO:0000256" key="3">
    <source>
        <dbReference type="SAM" id="MobiDB-lite"/>
    </source>
</evidence>
<evidence type="ECO:0000269" key="4">
    <source>
    </source>
</evidence>
<evidence type="ECO:0000269" key="5">
    <source>
    </source>
</evidence>
<evidence type="ECO:0000269" key="6">
    <source>
    </source>
</evidence>
<evidence type="ECO:0000269" key="7">
    <source>
    </source>
</evidence>
<evidence type="ECO:0000269" key="8">
    <source>
    </source>
</evidence>
<evidence type="ECO:0000305" key="9"/>
<reference key="1">
    <citation type="journal article" date="1999" name="Development">
        <title>Members of the YABBY gene family specify abaxial cell fate in Arabidopsis.</title>
        <authorList>
            <person name="Siegfried K.R."/>
            <person name="Eshed Y."/>
            <person name="Baum S.F."/>
            <person name="Otsuga D."/>
            <person name="Drews G.N."/>
            <person name="Bowman J.L."/>
        </authorList>
    </citation>
    <scope>NUCLEOTIDE SEQUENCE [MRNA]</scope>
    <scope>FUNCTION</scope>
    <scope>DEVELOPMENTAL STAGE</scope>
    <scope>TISSUE SPECIFICITY</scope>
</reference>
<reference key="2">
    <citation type="journal article" date="1999" name="Nature">
        <title>Sequence and analysis of chromosome 4 of the plant Arabidopsis thaliana.</title>
        <authorList>
            <person name="Mayer K.F.X."/>
            <person name="Schueller C."/>
            <person name="Wambutt R."/>
            <person name="Murphy G."/>
            <person name="Volckaert G."/>
            <person name="Pohl T."/>
            <person name="Duesterhoeft A."/>
            <person name="Stiekema W."/>
            <person name="Entian K.-D."/>
            <person name="Terryn N."/>
            <person name="Harris B."/>
            <person name="Ansorge W."/>
            <person name="Brandt P."/>
            <person name="Grivell L.A."/>
            <person name="Rieger M."/>
            <person name="Weichselgartner M."/>
            <person name="de Simone V."/>
            <person name="Obermaier B."/>
            <person name="Mache R."/>
            <person name="Mueller M."/>
            <person name="Kreis M."/>
            <person name="Delseny M."/>
            <person name="Puigdomenech P."/>
            <person name="Watson M."/>
            <person name="Schmidtheini T."/>
            <person name="Reichert B."/>
            <person name="Portetelle D."/>
            <person name="Perez-Alonso M."/>
            <person name="Boutry M."/>
            <person name="Bancroft I."/>
            <person name="Vos P."/>
            <person name="Hoheisel J."/>
            <person name="Zimmermann W."/>
            <person name="Wedler H."/>
            <person name="Ridley P."/>
            <person name="Langham S.-A."/>
            <person name="McCullagh B."/>
            <person name="Bilham L."/>
            <person name="Robben J."/>
            <person name="van der Schueren J."/>
            <person name="Grymonprez B."/>
            <person name="Chuang Y.-J."/>
            <person name="Vandenbussche F."/>
            <person name="Braeken M."/>
            <person name="Weltjens I."/>
            <person name="Voet M."/>
            <person name="Bastiaens I."/>
            <person name="Aert R."/>
            <person name="Defoor E."/>
            <person name="Weitzenegger T."/>
            <person name="Bothe G."/>
            <person name="Ramsperger U."/>
            <person name="Hilbert H."/>
            <person name="Braun M."/>
            <person name="Holzer E."/>
            <person name="Brandt A."/>
            <person name="Peters S."/>
            <person name="van Staveren M."/>
            <person name="Dirkse W."/>
            <person name="Mooijman P."/>
            <person name="Klein Lankhorst R."/>
            <person name="Rose M."/>
            <person name="Hauf J."/>
            <person name="Koetter P."/>
            <person name="Berneiser S."/>
            <person name="Hempel S."/>
            <person name="Feldpausch M."/>
            <person name="Lamberth S."/>
            <person name="Van den Daele H."/>
            <person name="De Keyser A."/>
            <person name="Buysshaert C."/>
            <person name="Gielen J."/>
            <person name="Villarroel R."/>
            <person name="De Clercq R."/>
            <person name="van Montagu M."/>
            <person name="Rogers J."/>
            <person name="Cronin A."/>
            <person name="Quail M.A."/>
            <person name="Bray-Allen S."/>
            <person name="Clark L."/>
            <person name="Doggett J."/>
            <person name="Hall S."/>
            <person name="Kay M."/>
            <person name="Lennard N."/>
            <person name="McLay K."/>
            <person name="Mayes R."/>
            <person name="Pettett A."/>
            <person name="Rajandream M.A."/>
            <person name="Lyne M."/>
            <person name="Benes V."/>
            <person name="Rechmann S."/>
            <person name="Borkova D."/>
            <person name="Bloecker H."/>
            <person name="Scharfe M."/>
            <person name="Grimm M."/>
            <person name="Loehnert T.-H."/>
            <person name="Dose S."/>
            <person name="de Haan M."/>
            <person name="Maarse A.C."/>
            <person name="Schaefer M."/>
            <person name="Mueller-Auer S."/>
            <person name="Gabel C."/>
            <person name="Fuchs M."/>
            <person name="Fartmann B."/>
            <person name="Granderath K."/>
            <person name="Dauner D."/>
            <person name="Herzl A."/>
            <person name="Neumann S."/>
            <person name="Argiriou A."/>
            <person name="Vitale D."/>
            <person name="Liguori R."/>
            <person name="Piravandi E."/>
            <person name="Massenet O."/>
            <person name="Quigley F."/>
            <person name="Clabauld G."/>
            <person name="Muendlein A."/>
            <person name="Felber R."/>
            <person name="Schnabl S."/>
            <person name="Hiller R."/>
            <person name="Schmidt W."/>
            <person name="Lecharny A."/>
            <person name="Aubourg S."/>
            <person name="Chefdor F."/>
            <person name="Cooke R."/>
            <person name="Berger C."/>
            <person name="Monfort A."/>
            <person name="Casacuberta E."/>
            <person name="Gibbons T."/>
            <person name="Weber N."/>
            <person name="Vandenbol M."/>
            <person name="Bargues M."/>
            <person name="Terol J."/>
            <person name="Torres A."/>
            <person name="Perez-Perez A."/>
            <person name="Purnelle B."/>
            <person name="Bent E."/>
            <person name="Johnson S."/>
            <person name="Tacon D."/>
            <person name="Jesse T."/>
            <person name="Heijnen L."/>
            <person name="Schwarz S."/>
            <person name="Scholler P."/>
            <person name="Heber S."/>
            <person name="Francs P."/>
            <person name="Bielke C."/>
            <person name="Frishman D."/>
            <person name="Haase D."/>
            <person name="Lemcke K."/>
            <person name="Mewes H.-W."/>
            <person name="Stocker S."/>
            <person name="Zaccaria P."/>
            <person name="Bevan M."/>
            <person name="Wilson R.K."/>
            <person name="de la Bastide M."/>
            <person name="Habermann K."/>
            <person name="Parnell L."/>
            <person name="Dedhia N."/>
            <person name="Gnoj L."/>
            <person name="Schutz K."/>
            <person name="Huang E."/>
            <person name="Spiegel L."/>
            <person name="Sekhon M."/>
            <person name="Murray J."/>
            <person name="Sheet P."/>
            <person name="Cordes M."/>
            <person name="Abu-Threideh J."/>
            <person name="Stoneking T."/>
            <person name="Kalicki J."/>
            <person name="Graves T."/>
            <person name="Harmon G."/>
            <person name="Edwards J."/>
            <person name="Latreille P."/>
            <person name="Courtney L."/>
            <person name="Cloud J."/>
            <person name="Abbott A."/>
            <person name="Scott K."/>
            <person name="Johnson D."/>
            <person name="Minx P."/>
            <person name="Bentley D."/>
            <person name="Fulton B."/>
            <person name="Miller N."/>
            <person name="Greco T."/>
            <person name="Kemp K."/>
            <person name="Kramer J."/>
            <person name="Fulton L."/>
            <person name="Mardis E."/>
            <person name="Dante M."/>
            <person name="Pepin K."/>
            <person name="Hillier L.W."/>
            <person name="Nelson J."/>
            <person name="Spieth J."/>
            <person name="Ryan E."/>
            <person name="Andrews S."/>
            <person name="Geisel C."/>
            <person name="Layman D."/>
            <person name="Du H."/>
            <person name="Ali J."/>
            <person name="Berghoff A."/>
            <person name="Jones K."/>
            <person name="Drone K."/>
            <person name="Cotton M."/>
            <person name="Joshu C."/>
            <person name="Antonoiu B."/>
            <person name="Zidanic M."/>
            <person name="Strong C."/>
            <person name="Sun H."/>
            <person name="Lamar B."/>
            <person name="Yordan C."/>
            <person name="Ma P."/>
            <person name="Zhong J."/>
            <person name="Preston R."/>
            <person name="Vil D."/>
            <person name="Shekher M."/>
            <person name="Matero A."/>
            <person name="Shah R."/>
            <person name="Swaby I.K."/>
            <person name="O'Shaughnessy A."/>
            <person name="Rodriguez M."/>
            <person name="Hoffman J."/>
            <person name="Till S."/>
            <person name="Granat S."/>
            <person name="Shohdy N."/>
            <person name="Hasegawa A."/>
            <person name="Hameed A."/>
            <person name="Lodhi M."/>
            <person name="Johnson A."/>
            <person name="Chen E."/>
            <person name="Marra M.A."/>
            <person name="Martienssen R."/>
            <person name="McCombie W.R."/>
        </authorList>
    </citation>
    <scope>NUCLEOTIDE SEQUENCE [LARGE SCALE GENOMIC DNA]</scope>
    <source>
        <strain>cv. Columbia</strain>
    </source>
</reference>
<reference key="3">
    <citation type="journal article" date="2017" name="Plant J.">
        <title>Araport11: a complete reannotation of the Arabidopsis thaliana reference genome.</title>
        <authorList>
            <person name="Cheng C.Y."/>
            <person name="Krishnakumar V."/>
            <person name="Chan A.P."/>
            <person name="Thibaud-Nissen F."/>
            <person name="Schobel S."/>
            <person name="Town C.D."/>
        </authorList>
    </citation>
    <scope>GENOME REANNOTATION</scope>
    <source>
        <strain>cv. Columbia</strain>
    </source>
</reference>
<reference key="4">
    <citation type="journal article" date="2003" name="Science">
        <title>Empirical analysis of transcriptional activity in the Arabidopsis genome.</title>
        <authorList>
            <person name="Yamada K."/>
            <person name="Lim J."/>
            <person name="Dale J.M."/>
            <person name="Chen H."/>
            <person name="Shinn P."/>
            <person name="Palm C.J."/>
            <person name="Southwick A.M."/>
            <person name="Wu H.C."/>
            <person name="Kim C.J."/>
            <person name="Nguyen M."/>
            <person name="Pham P.K."/>
            <person name="Cheuk R.F."/>
            <person name="Karlin-Newmann G."/>
            <person name="Liu S.X."/>
            <person name="Lam B."/>
            <person name="Sakano H."/>
            <person name="Wu T."/>
            <person name="Yu G."/>
            <person name="Miranda M."/>
            <person name="Quach H.L."/>
            <person name="Tripp M."/>
            <person name="Chang C.H."/>
            <person name="Lee J.M."/>
            <person name="Toriumi M.J."/>
            <person name="Chan M.M."/>
            <person name="Tang C.C."/>
            <person name="Onodera C.S."/>
            <person name="Deng J.M."/>
            <person name="Akiyama K."/>
            <person name="Ansari Y."/>
            <person name="Arakawa T."/>
            <person name="Banh J."/>
            <person name="Banno F."/>
            <person name="Bowser L."/>
            <person name="Brooks S.Y."/>
            <person name="Carninci P."/>
            <person name="Chao Q."/>
            <person name="Choy N."/>
            <person name="Enju A."/>
            <person name="Goldsmith A.D."/>
            <person name="Gurjal M."/>
            <person name="Hansen N.F."/>
            <person name="Hayashizaki Y."/>
            <person name="Johnson-Hopson C."/>
            <person name="Hsuan V.W."/>
            <person name="Iida K."/>
            <person name="Karnes M."/>
            <person name="Khan S."/>
            <person name="Koesema E."/>
            <person name="Ishida J."/>
            <person name="Jiang P.X."/>
            <person name="Jones T."/>
            <person name="Kawai J."/>
            <person name="Kamiya A."/>
            <person name="Meyers C."/>
            <person name="Nakajima M."/>
            <person name="Narusaka M."/>
            <person name="Seki M."/>
            <person name="Sakurai T."/>
            <person name="Satou M."/>
            <person name="Tamse R."/>
            <person name="Vaysberg M."/>
            <person name="Wallender E.K."/>
            <person name="Wong C."/>
            <person name="Yamamura Y."/>
            <person name="Yuan S."/>
            <person name="Shinozaki K."/>
            <person name="Davis R.W."/>
            <person name="Theologis A."/>
            <person name="Ecker J.R."/>
        </authorList>
    </citation>
    <scope>NUCLEOTIDE SEQUENCE [LARGE SCALE MRNA]</scope>
    <source>
        <strain>cv. Columbia</strain>
    </source>
</reference>
<reference key="5">
    <citation type="journal article" date="2000" name="Curr. Opin. Plant Biol.">
        <title>The YABBY gene family and abaxial cell fate.</title>
        <authorList>
            <person name="Bowman J.L."/>
        </authorList>
    </citation>
    <scope>GENE FAMILY</scope>
    <scope>NOMENCLATURE</scope>
</reference>
<reference key="6">
    <citation type="journal article" date="2002" name="Plant Cell">
        <title>YABBY polarity genes mediate the repression of KNOX homeobox genes in Arabidopsis.</title>
        <authorList>
            <person name="Kumaran M.K."/>
            <person name="Bowman J.L."/>
            <person name="Sundaresan V."/>
        </authorList>
    </citation>
    <scope>FUNCTION</scope>
    <scope>TISSUE SPECIFICITY</scope>
</reference>
<reference key="7">
    <citation type="journal article" date="2004" name="Plant Physiol.">
        <title>Organ polarity in Arabidopsis. NOZZLE physically interacts with members of the YABBY family.</title>
        <authorList>
            <person name="Sieber P."/>
            <person name="Petrascheck M."/>
            <person name="Barberis A."/>
            <person name="Schneitz K."/>
        </authorList>
    </citation>
    <scope>INTERACTION WITH SPL/NZZ</scope>
</reference>
<reference key="8">
    <citation type="journal article" date="2009" name="Plant Cell">
        <title>YABBYs and the transcriptional corepressors LEUNIG and LEUNIG_HOMOLOG maintain leaf polarity and meristem activity in Arabidopsis.</title>
        <authorList>
            <person name="Stahle M.I."/>
            <person name="Kuehlich J."/>
            <person name="Staron L."/>
            <person name="von Arnim A.G."/>
            <person name="Golz J.F."/>
        </authorList>
    </citation>
    <scope>FUNCTION</scope>
    <scope>DISRUPTION PHENOTYPE</scope>
    <scope>INTERACTION WITH LUG AND LUH</scope>
</reference>
<reference key="9">
    <citation type="journal article" date="2014" name="J. Genet. Genomics">
        <title>SPOROCYTELESS is a novel embryophyte-specific transcription repressor that interacts with TPL and TCP proteins in Arabidopsis.</title>
        <authorList>
            <person name="Chen G.H."/>
            <person name="Sun J.Y."/>
            <person name="Liu M."/>
            <person name="Liu J."/>
            <person name="Yang W.C."/>
        </authorList>
    </citation>
    <scope>INTERACTION WITH SPL/NZZ AND SPEAR2</scope>
</reference>
<dbReference type="EMBL" id="AF136540">
    <property type="protein sequence ID" value="AAD33717.1"/>
    <property type="molecule type" value="mRNA"/>
</dbReference>
<dbReference type="EMBL" id="AF069299">
    <property type="protein sequence ID" value="AAC19313.1"/>
    <property type="status" value="ALT_SEQ"/>
    <property type="molecule type" value="Genomic_DNA"/>
</dbReference>
<dbReference type="EMBL" id="AL161471">
    <property type="protein sequence ID" value="CAB80776.1"/>
    <property type="status" value="ALT_SEQ"/>
    <property type="molecule type" value="Genomic_DNA"/>
</dbReference>
<dbReference type="EMBL" id="CP002687">
    <property type="protein sequence ID" value="AEE81834.1"/>
    <property type="molecule type" value="Genomic_DNA"/>
</dbReference>
<dbReference type="EMBL" id="AY037186">
    <property type="protein sequence ID" value="AAK59771.1"/>
    <property type="molecule type" value="mRNA"/>
</dbReference>
<dbReference type="EMBL" id="BT002662">
    <property type="protein sequence ID" value="AAO11578.1"/>
    <property type="molecule type" value="mRNA"/>
</dbReference>
<dbReference type="PIR" id="T01346">
    <property type="entry name" value="T01346"/>
</dbReference>
<dbReference type="RefSeq" id="NP_567154.1">
    <molecule id="Q9XFB1-1"/>
    <property type="nucleotide sequence ID" value="NM_116235.3"/>
</dbReference>
<dbReference type="SMR" id="Q9XFB1"/>
<dbReference type="BioGRID" id="13205">
    <property type="interactions" value="14"/>
</dbReference>
<dbReference type="FunCoup" id="Q9XFB1">
    <property type="interactions" value="1"/>
</dbReference>
<dbReference type="IntAct" id="Q9XFB1">
    <property type="interactions" value="29"/>
</dbReference>
<dbReference type="STRING" id="3702.Q9XFB1"/>
<dbReference type="PaxDb" id="3702-AT4G00180.1"/>
<dbReference type="ProteomicsDB" id="242913">
    <molecule id="Q9XFB1-1"/>
</dbReference>
<dbReference type="EnsemblPlants" id="AT4G00180.1">
    <molecule id="Q9XFB1-1"/>
    <property type="protein sequence ID" value="AT4G00180.1"/>
    <property type="gene ID" value="AT4G00180"/>
</dbReference>
<dbReference type="GeneID" id="827914"/>
<dbReference type="Gramene" id="AT4G00180.1">
    <molecule id="Q9XFB1-1"/>
    <property type="protein sequence ID" value="AT4G00180.1"/>
    <property type="gene ID" value="AT4G00180"/>
</dbReference>
<dbReference type="KEGG" id="ath:AT4G00180"/>
<dbReference type="Araport" id="AT4G00180"/>
<dbReference type="TAIR" id="AT4G00180">
    <property type="gene designation" value="YAB3"/>
</dbReference>
<dbReference type="eggNOG" id="ENOG502QQ88">
    <property type="taxonomic scope" value="Eukaryota"/>
</dbReference>
<dbReference type="HOGENOM" id="CLU_071156_1_0_1"/>
<dbReference type="InParanoid" id="Q9XFB1"/>
<dbReference type="OMA" id="SAMSGCI"/>
<dbReference type="OrthoDB" id="667577at2759"/>
<dbReference type="PhylomeDB" id="Q9XFB1"/>
<dbReference type="PRO" id="PR:Q9XFB1"/>
<dbReference type="Proteomes" id="UP000006548">
    <property type="component" value="Chromosome 4"/>
</dbReference>
<dbReference type="ExpressionAtlas" id="Q9XFB1">
    <property type="expression patterns" value="baseline and differential"/>
</dbReference>
<dbReference type="GO" id="GO:0005634">
    <property type="term" value="C:nucleus"/>
    <property type="evidence" value="ECO:0007669"/>
    <property type="project" value="UniProtKB-SubCell"/>
</dbReference>
<dbReference type="GO" id="GO:0003700">
    <property type="term" value="F:DNA-binding transcription factor activity"/>
    <property type="evidence" value="ECO:0000250"/>
    <property type="project" value="TAIR"/>
</dbReference>
<dbReference type="GO" id="GO:0000976">
    <property type="term" value="F:transcription cis-regulatory region binding"/>
    <property type="evidence" value="ECO:0000353"/>
    <property type="project" value="TAIR"/>
</dbReference>
<dbReference type="GO" id="GO:0008270">
    <property type="term" value="F:zinc ion binding"/>
    <property type="evidence" value="ECO:0007669"/>
    <property type="project" value="UniProtKB-KW"/>
</dbReference>
<dbReference type="GO" id="GO:0010158">
    <property type="term" value="P:abaxial cell fate specification"/>
    <property type="evidence" value="ECO:0000316"/>
    <property type="project" value="TAIR"/>
</dbReference>
<dbReference type="GO" id="GO:0010154">
    <property type="term" value="P:fruit development"/>
    <property type="evidence" value="ECO:0000315"/>
    <property type="project" value="TAIR"/>
</dbReference>
<dbReference type="GO" id="GO:0009944">
    <property type="term" value="P:polarity specification of adaxial/abaxial axis"/>
    <property type="evidence" value="ECO:0000315"/>
    <property type="project" value="UniProtKB"/>
</dbReference>
<dbReference type="GO" id="GO:0006355">
    <property type="term" value="P:regulation of DNA-templated transcription"/>
    <property type="evidence" value="ECO:0000304"/>
    <property type="project" value="TAIR"/>
</dbReference>
<dbReference type="GO" id="GO:2000024">
    <property type="term" value="P:regulation of leaf development"/>
    <property type="evidence" value="ECO:0000315"/>
    <property type="project" value="UniProtKB"/>
</dbReference>
<dbReference type="GO" id="GO:1902183">
    <property type="term" value="P:regulation of shoot apical meristem development"/>
    <property type="evidence" value="ECO:0000315"/>
    <property type="project" value="UniProtKB"/>
</dbReference>
<dbReference type="CDD" id="cd00084">
    <property type="entry name" value="HMG-box_SF"/>
    <property type="match status" value="1"/>
</dbReference>
<dbReference type="FunFam" id="1.10.30.10:FF:000047">
    <property type="entry name" value="Axial regulator YABBY"/>
    <property type="match status" value="1"/>
</dbReference>
<dbReference type="Gene3D" id="1.10.30.10">
    <property type="entry name" value="High mobility group box domain"/>
    <property type="match status" value="1"/>
</dbReference>
<dbReference type="InterPro" id="IPR036910">
    <property type="entry name" value="HMG_box_dom_sf"/>
</dbReference>
<dbReference type="InterPro" id="IPR006780">
    <property type="entry name" value="YABBY"/>
</dbReference>
<dbReference type="InterPro" id="IPR056775">
    <property type="entry name" value="YABBY_C"/>
</dbReference>
<dbReference type="InterPro" id="IPR056776">
    <property type="entry name" value="YABBY_N"/>
</dbReference>
<dbReference type="PANTHER" id="PTHR31675:SF43">
    <property type="entry name" value="AXIAL REGULATOR YABBY 3"/>
    <property type="match status" value="1"/>
</dbReference>
<dbReference type="PANTHER" id="PTHR31675">
    <property type="entry name" value="PROTEIN YABBY 6-RELATED"/>
    <property type="match status" value="1"/>
</dbReference>
<dbReference type="Pfam" id="PF04690">
    <property type="entry name" value="YABBY"/>
    <property type="match status" value="1"/>
</dbReference>
<dbReference type="Pfam" id="PF24868">
    <property type="entry name" value="YABBY_N"/>
    <property type="match status" value="1"/>
</dbReference>
<dbReference type="SUPFAM" id="SSF47095">
    <property type="entry name" value="HMG-box"/>
    <property type="match status" value="1"/>
</dbReference>
<protein>
    <recommendedName>
        <fullName>Axial regulator YABBY 3</fullName>
    </recommendedName>
</protein>
<sequence>MSSMSMSSSSAPAFPPDHFSSTDQLCYVHCSFCDTVLAVSVPPSSLFKTVTVRCGHCSNLLSVTVSMRALLLPSVSNLGHSFLPPPPPPPPPNLLEEMRSGGQNINMNMMMSHHASAHHPNEHLVMATRNGRSVDHLQEMPRPPPANRPPEKRQRVPSAYNRFIKEEIQRIKAGNPDISHREAFSAAAKNWAHFPHIHFGLMADHPPTKKANVRQQEGEDGMMGREGFYGSAANVGVAHN</sequence>
<name>YAB3_ARATH</name>
<comment type="function">
    <text evidence="4 5 7">Involved in the abaxial cell fate determination during embryogenesis and organogenesis. Regulates the initiation of embryonic shoot apical meristem (SAM) development (PubMed:10457020, PubMed:12417699, PubMed:19837869). Contributes to the repression of KNOX genes (STM, KNAT1/BP and KNAT2) to avoid ectopic meristems. Binds DNA without sequence specificity (PubMed:10457020, PubMed:12417699).</text>
</comment>
<comment type="subunit">
    <text evidence="6 7 8">Interacts with SPL/NZZ (PubMed:15299139, PubMed:25527103). Interacts with SPEAR2 (PubMed:25527103). Binds to LUG and LUH; these complexes promote adaxial cell identity in leaves as well as embryonic shoot apical meristem (SAM) initiation and postembryonic SAM maintenance (PubMed:19837869).</text>
</comment>
<comment type="interaction">
    <interactant intactId="EBI-1115657">
        <id>Q9XFB1</id>
    </interactant>
    <interactant intactId="EBI-617095">
        <id>Q9LEZ3</id>
        <label>BIM1</label>
    </interactant>
    <organismsDiffer>false</organismsDiffer>
    <experiments>3</experiments>
</comment>
<comment type="interaction">
    <interactant intactId="EBI-1115657">
        <id>Q9XFB1</id>
    </interactant>
    <interactant intactId="EBI-4426504">
        <id>Q93WJ9</id>
        <label>KAN1</label>
    </interactant>
    <organismsDiffer>false</organismsDiffer>
    <experiments>3</experiments>
</comment>
<comment type="interaction">
    <interactant intactId="EBI-1115657">
        <id>Q9XFB1</id>
    </interactant>
    <interactant intactId="EBI-15192813">
        <id>Q9FDW1</id>
        <label>MYB44</label>
    </interactant>
    <organismsDiffer>false</organismsDiffer>
    <experiments>3</experiments>
</comment>
<comment type="interaction">
    <interactant intactId="EBI-1115657">
        <id>Q9XFB1</id>
    </interactant>
    <interactant intactId="EBI-1113588">
        <id>O81836</id>
        <label>SPL</label>
    </interactant>
    <organismsDiffer>false</organismsDiffer>
    <experiments>3</experiments>
</comment>
<comment type="subcellular location">
    <subcellularLocation>
        <location evidence="1">Nucleus</location>
    </subcellularLocation>
</comment>
<comment type="alternative products">
    <event type="alternative splicing"/>
    <isoform>
        <id>Q9XFB1-1</id>
        <name>1</name>
        <sequence type="displayed"/>
    </isoform>
    <text>A number of isoforms are produced. According to EST sequences.</text>
</comment>
<comment type="tissue specificity">
    <text evidence="4 5">Expressed in abaxial regions of lateral aerial organ primordia leading to cotyledons, leaves, flower meristems, sepals, petals, stamen and carpels, but not in roots.</text>
</comment>
<comment type="developmental stage">
    <text evidence="4">Expressed in subepidermal cells of anlagen regions, then in abaxial part of primordia and finally in differentiating organs. Levels decrease in differentiated organs. In embryo the expression starts during the heart stage in the cotyledon anlagen. Later, expression expands to abaxial domain of the cotyledon primordia and decrease as the embryo matures. In stamen, expression restricted to the abaxial region differentiating into the connective. In gynoecium, expressed in the abaxial cell layers differentiating into the valves.</text>
</comment>
<comment type="disruption phenotype">
    <text evidence="7">Leaves polarity and growth defects.</text>
</comment>
<comment type="similarity">
    <text evidence="9">Belongs to the YABBY family.</text>
</comment>
<comment type="sequence caution" evidence="9">
    <conflict type="erroneous gene model prediction">
        <sequence resource="EMBL-CDS" id="AAC19313"/>
    </conflict>
</comment>
<comment type="sequence caution" evidence="9">
    <conflict type="erroneous gene model prediction">
        <sequence resource="EMBL-CDS" id="CAB80776"/>
    </conflict>
</comment>
<accession>Q9XFB1</accession>
<accession>O81319</accession>
<feature type="chain" id="PRO_0000133719" description="Axial regulator YABBY 3">
    <location>
        <begin position="1"/>
        <end position="240"/>
    </location>
</feature>
<feature type="zinc finger region" description="C4-type" evidence="2">
    <location>
        <begin position="30"/>
        <end position="57"/>
    </location>
</feature>
<feature type="region of interest" description="Disordered" evidence="3">
    <location>
        <begin position="135"/>
        <end position="156"/>
    </location>
</feature>
<proteinExistence type="evidence at protein level"/>
<organism>
    <name type="scientific">Arabidopsis thaliana</name>
    <name type="common">Mouse-ear cress</name>
    <dbReference type="NCBI Taxonomy" id="3702"/>
    <lineage>
        <taxon>Eukaryota</taxon>
        <taxon>Viridiplantae</taxon>
        <taxon>Streptophyta</taxon>
        <taxon>Embryophyta</taxon>
        <taxon>Tracheophyta</taxon>
        <taxon>Spermatophyta</taxon>
        <taxon>Magnoliopsida</taxon>
        <taxon>eudicotyledons</taxon>
        <taxon>Gunneridae</taxon>
        <taxon>Pentapetalae</taxon>
        <taxon>rosids</taxon>
        <taxon>malvids</taxon>
        <taxon>Brassicales</taxon>
        <taxon>Brassicaceae</taxon>
        <taxon>Camelineae</taxon>
        <taxon>Arabidopsis</taxon>
    </lineage>
</organism>